<accession>A0PXC5</accession>
<protein>
    <recommendedName>
        <fullName evidence="1">Acetyl-coenzyme A carboxylase carboxyl transferase subunit beta</fullName>
        <shortName evidence="1">ACCase subunit beta</shortName>
        <shortName evidence="1">Acetyl-CoA carboxylase carboxyltransferase subunit beta</shortName>
        <ecNumber evidence="1">2.1.3.15</ecNumber>
    </recommendedName>
</protein>
<organism>
    <name type="scientific">Clostridium novyi (strain NT)</name>
    <dbReference type="NCBI Taxonomy" id="386415"/>
    <lineage>
        <taxon>Bacteria</taxon>
        <taxon>Bacillati</taxon>
        <taxon>Bacillota</taxon>
        <taxon>Clostridia</taxon>
        <taxon>Eubacteriales</taxon>
        <taxon>Clostridiaceae</taxon>
        <taxon>Clostridium</taxon>
    </lineage>
</organism>
<name>ACCD_CLONN</name>
<feature type="chain" id="PRO_0000358971" description="Acetyl-coenzyme A carboxylase carboxyl transferase subunit beta">
    <location>
        <begin position="1"/>
        <end position="287"/>
    </location>
</feature>
<feature type="domain" description="CoA carboxyltransferase N-terminal" evidence="2">
    <location>
        <begin position="36"/>
        <end position="287"/>
    </location>
</feature>
<feature type="zinc finger region" description="C4-type" evidence="1">
    <location>
        <begin position="40"/>
        <end position="62"/>
    </location>
</feature>
<feature type="binding site" evidence="1">
    <location>
        <position position="40"/>
    </location>
    <ligand>
        <name>Zn(2+)</name>
        <dbReference type="ChEBI" id="CHEBI:29105"/>
    </ligand>
</feature>
<feature type="binding site" evidence="1">
    <location>
        <position position="43"/>
    </location>
    <ligand>
        <name>Zn(2+)</name>
        <dbReference type="ChEBI" id="CHEBI:29105"/>
    </ligand>
</feature>
<feature type="binding site" evidence="1">
    <location>
        <position position="59"/>
    </location>
    <ligand>
        <name>Zn(2+)</name>
        <dbReference type="ChEBI" id="CHEBI:29105"/>
    </ligand>
</feature>
<feature type="binding site" evidence="1">
    <location>
        <position position="62"/>
    </location>
    <ligand>
        <name>Zn(2+)</name>
        <dbReference type="ChEBI" id="CHEBI:29105"/>
    </ligand>
</feature>
<sequence length="287" mass="32358">MFKINPIFKKTKYITINTSKDNNINKENIPNIPEGMWVKCDRCGKTLYKKDLDENLKVCKFCNKHYRMNAWERIDLIVDTGTFREFGENITSKNPLDFSGYEDKLKGIKEKTKLKEGVITGKGKIYGKNVVIAVMDSRFMMGSMGSAVGEKITRAVEKATEERLPIIIFTTSGGARMQESMFSLMQMAKTSAAIARHNEAGLLYIPVLTDPTTGGVIASFAMLGDIILSEPGTLIGFAGRRVIEQTIKQKLPDDFQSAEFLLEHGFLDKIVNRNELKKVLYKILELH</sequence>
<keyword id="KW-0067">ATP-binding</keyword>
<keyword id="KW-0963">Cytoplasm</keyword>
<keyword id="KW-0275">Fatty acid biosynthesis</keyword>
<keyword id="KW-0276">Fatty acid metabolism</keyword>
<keyword id="KW-0444">Lipid biosynthesis</keyword>
<keyword id="KW-0443">Lipid metabolism</keyword>
<keyword id="KW-0479">Metal-binding</keyword>
<keyword id="KW-0547">Nucleotide-binding</keyword>
<keyword id="KW-1185">Reference proteome</keyword>
<keyword id="KW-0808">Transferase</keyword>
<keyword id="KW-0862">Zinc</keyword>
<keyword id="KW-0863">Zinc-finger</keyword>
<comment type="function">
    <text evidence="1">Component of the acetyl coenzyme A carboxylase (ACC) complex. Biotin carboxylase (BC) catalyzes the carboxylation of biotin on its carrier protein (BCCP) and then the CO(2) group is transferred by the transcarboxylase to acetyl-CoA to form malonyl-CoA.</text>
</comment>
<comment type="catalytic activity">
    <reaction evidence="1">
        <text>N(6)-carboxybiotinyl-L-lysyl-[protein] + acetyl-CoA = N(6)-biotinyl-L-lysyl-[protein] + malonyl-CoA</text>
        <dbReference type="Rhea" id="RHEA:54728"/>
        <dbReference type="Rhea" id="RHEA-COMP:10505"/>
        <dbReference type="Rhea" id="RHEA-COMP:10506"/>
        <dbReference type="ChEBI" id="CHEBI:57288"/>
        <dbReference type="ChEBI" id="CHEBI:57384"/>
        <dbReference type="ChEBI" id="CHEBI:83144"/>
        <dbReference type="ChEBI" id="CHEBI:83145"/>
        <dbReference type="EC" id="2.1.3.15"/>
    </reaction>
</comment>
<comment type="cofactor">
    <cofactor evidence="1">
        <name>Zn(2+)</name>
        <dbReference type="ChEBI" id="CHEBI:29105"/>
    </cofactor>
    <text evidence="1">Binds 1 zinc ion per subunit.</text>
</comment>
<comment type="pathway">
    <text evidence="1">Lipid metabolism; malonyl-CoA biosynthesis; malonyl-CoA from acetyl-CoA: step 1/1.</text>
</comment>
<comment type="subunit">
    <text evidence="1">Acetyl-CoA carboxylase is a heterohexamer composed of biotin carboxyl carrier protein (AccB), biotin carboxylase (AccC) and two subunits each of ACCase subunit alpha (AccA) and ACCase subunit beta (AccD).</text>
</comment>
<comment type="subcellular location">
    <subcellularLocation>
        <location evidence="1">Cytoplasm</location>
    </subcellularLocation>
</comment>
<comment type="similarity">
    <text evidence="1">Belongs to the AccD/PCCB family.</text>
</comment>
<dbReference type="EC" id="2.1.3.15" evidence="1"/>
<dbReference type="EMBL" id="CP000382">
    <property type="protein sequence ID" value="ABK61395.1"/>
    <property type="molecule type" value="Genomic_DNA"/>
</dbReference>
<dbReference type="RefSeq" id="WP_011721048.1">
    <property type="nucleotide sequence ID" value="NC_008593.1"/>
</dbReference>
<dbReference type="SMR" id="A0PXC5"/>
<dbReference type="STRING" id="386415.NT01CX_0930"/>
<dbReference type="KEGG" id="cno:NT01CX_0930"/>
<dbReference type="eggNOG" id="COG0777">
    <property type="taxonomic scope" value="Bacteria"/>
</dbReference>
<dbReference type="HOGENOM" id="CLU_015486_1_0_9"/>
<dbReference type="UniPathway" id="UPA00655">
    <property type="reaction ID" value="UER00711"/>
</dbReference>
<dbReference type="Proteomes" id="UP000008220">
    <property type="component" value="Chromosome"/>
</dbReference>
<dbReference type="GO" id="GO:0009317">
    <property type="term" value="C:acetyl-CoA carboxylase complex"/>
    <property type="evidence" value="ECO:0007669"/>
    <property type="project" value="InterPro"/>
</dbReference>
<dbReference type="GO" id="GO:0003989">
    <property type="term" value="F:acetyl-CoA carboxylase activity"/>
    <property type="evidence" value="ECO:0007669"/>
    <property type="project" value="InterPro"/>
</dbReference>
<dbReference type="GO" id="GO:0005524">
    <property type="term" value="F:ATP binding"/>
    <property type="evidence" value="ECO:0007669"/>
    <property type="project" value="UniProtKB-KW"/>
</dbReference>
<dbReference type="GO" id="GO:0016743">
    <property type="term" value="F:carboxyl- or carbamoyltransferase activity"/>
    <property type="evidence" value="ECO:0007669"/>
    <property type="project" value="UniProtKB-UniRule"/>
</dbReference>
<dbReference type="GO" id="GO:0008270">
    <property type="term" value="F:zinc ion binding"/>
    <property type="evidence" value="ECO:0007669"/>
    <property type="project" value="UniProtKB-UniRule"/>
</dbReference>
<dbReference type="GO" id="GO:0006633">
    <property type="term" value="P:fatty acid biosynthetic process"/>
    <property type="evidence" value="ECO:0007669"/>
    <property type="project" value="UniProtKB-KW"/>
</dbReference>
<dbReference type="GO" id="GO:2001295">
    <property type="term" value="P:malonyl-CoA biosynthetic process"/>
    <property type="evidence" value="ECO:0007669"/>
    <property type="project" value="UniProtKB-UniRule"/>
</dbReference>
<dbReference type="Gene3D" id="3.90.226.10">
    <property type="entry name" value="2-enoyl-CoA Hydratase, Chain A, domain 1"/>
    <property type="match status" value="1"/>
</dbReference>
<dbReference type="HAMAP" id="MF_01395">
    <property type="entry name" value="AcetylCoA_CT_beta"/>
    <property type="match status" value="1"/>
</dbReference>
<dbReference type="InterPro" id="IPR034733">
    <property type="entry name" value="AcCoA_carboxyl_beta"/>
</dbReference>
<dbReference type="InterPro" id="IPR000438">
    <property type="entry name" value="Acetyl_CoA_COase_Trfase_b_su"/>
</dbReference>
<dbReference type="InterPro" id="IPR029045">
    <property type="entry name" value="ClpP/crotonase-like_dom_sf"/>
</dbReference>
<dbReference type="InterPro" id="IPR011762">
    <property type="entry name" value="COA_CT_N"/>
</dbReference>
<dbReference type="InterPro" id="IPR041010">
    <property type="entry name" value="Znf-ACC"/>
</dbReference>
<dbReference type="NCBIfam" id="TIGR00515">
    <property type="entry name" value="accD"/>
    <property type="match status" value="1"/>
</dbReference>
<dbReference type="PANTHER" id="PTHR42995">
    <property type="entry name" value="ACETYL-COENZYME A CARBOXYLASE CARBOXYL TRANSFERASE SUBUNIT BETA, CHLOROPLASTIC"/>
    <property type="match status" value="1"/>
</dbReference>
<dbReference type="PANTHER" id="PTHR42995:SF5">
    <property type="entry name" value="ACETYL-COENZYME A CARBOXYLASE CARBOXYL TRANSFERASE SUBUNIT BETA, CHLOROPLASTIC"/>
    <property type="match status" value="1"/>
</dbReference>
<dbReference type="Pfam" id="PF01039">
    <property type="entry name" value="Carboxyl_trans"/>
    <property type="match status" value="1"/>
</dbReference>
<dbReference type="Pfam" id="PF17848">
    <property type="entry name" value="Zn_ribbon_ACC"/>
    <property type="match status" value="1"/>
</dbReference>
<dbReference type="PRINTS" id="PR01070">
    <property type="entry name" value="ACCCTRFRASEB"/>
</dbReference>
<dbReference type="SUPFAM" id="SSF52096">
    <property type="entry name" value="ClpP/crotonase"/>
    <property type="match status" value="1"/>
</dbReference>
<dbReference type="PROSITE" id="PS50980">
    <property type="entry name" value="COA_CT_NTER"/>
    <property type="match status" value="1"/>
</dbReference>
<gene>
    <name evidence="1" type="primary">accD</name>
    <name type="ordered locus">NT01CX_0930</name>
</gene>
<evidence type="ECO:0000255" key="1">
    <source>
        <dbReference type="HAMAP-Rule" id="MF_01395"/>
    </source>
</evidence>
<evidence type="ECO:0000255" key="2">
    <source>
        <dbReference type="PROSITE-ProRule" id="PRU01136"/>
    </source>
</evidence>
<proteinExistence type="inferred from homology"/>
<reference key="1">
    <citation type="journal article" date="2006" name="Nat. Biotechnol.">
        <title>The genome and transcriptomes of the anti-tumor agent Clostridium novyi-NT.</title>
        <authorList>
            <person name="Bettegowda C."/>
            <person name="Huang X."/>
            <person name="Lin J."/>
            <person name="Cheong I."/>
            <person name="Kohli M."/>
            <person name="Szabo S.A."/>
            <person name="Zhang X."/>
            <person name="Diaz L.A. Jr."/>
            <person name="Velculescu V.E."/>
            <person name="Parmigiani G."/>
            <person name="Kinzler K.W."/>
            <person name="Vogelstein B."/>
            <person name="Zhou S."/>
        </authorList>
    </citation>
    <scope>NUCLEOTIDE SEQUENCE [LARGE SCALE GENOMIC DNA]</scope>
    <source>
        <strain>NT</strain>
    </source>
</reference>